<dbReference type="EMBL" id="FL795206">
    <property type="status" value="NOT_ANNOTATED_CDS"/>
    <property type="molecule type" value="mRNA"/>
</dbReference>
<dbReference type="SMR" id="P0DI33"/>
<dbReference type="GO" id="GO:0005886">
    <property type="term" value="C:plasma membrane"/>
    <property type="evidence" value="ECO:0007669"/>
    <property type="project" value="UniProtKB-SubCell"/>
</dbReference>
<dbReference type="GO" id="GO:0071555">
    <property type="term" value="P:cell wall organization"/>
    <property type="evidence" value="ECO:0007669"/>
    <property type="project" value="UniProtKB-KW"/>
</dbReference>
<dbReference type="InterPro" id="IPR006459">
    <property type="entry name" value="CASP/CASPL"/>
</dbReference>
<dbReference type="InterPro" id="IPR006702">
    <property type="entry name" value="CASP_dom"/>
</dbReference>
<dbReference type="InterPro" id="IPR044173">
    <property type="entry name" value="CASPL"/>
</dbReference>
<dbReference type="NCBIfam" id="TIGR01569">
    <property type="entry name" value="A_tha_TIGR01569"/>
    <property type="match status" value="1"/>
</dbReference>
<dbReference type="PANTHER" id="PTHR36488:SF12">
    <property type="entry name" value="CASP-LIKE PROTEIN"/>
    <property type="match status" value="1"/>
</dbReference>
<dbReference type="PANTHER" id="PTHR36488">
    <property type="entry name" value="CASP-LIKE PROTEIN 1U1"/>
    <property type="match status" value="1"/>
</dbReference>
<dbReference type="Pfam" id="PF04535">
    <property type="entry name" value="CASP_dom"/>
    <property type="match status" value="1"/>
</dbReference>
<accession>P0DI33</accession>
<sequence>MKESGEHGETSKAPLNRGVSKGLSVLDLILRFIAIIGTLASAIAMGTTNETLPFFTQFIRFKAQYSDLPTLTFFVVANSIVCAYLILSLPLSIVHIIRSRAKFSRLLLIFLDAVMLALVTAGASAAAAIVYLAHKGNVRANWLAICQQFDSFCERISGSLIGSFGAMVVLILLILLSAIALARR</sequence>
<organism>
    <name type="scientific">Panicum virgatum</name>
    <name type="common">Blackwell switchgrass</name>
    <dbReference type="NCBI Taxonomy" id="38727"/>
    <lineage>
        <taxon>Eukaryota</taxon>
        <taxon>Viridiplantae</taxon>
        <taxon>Streptophyta</taxon>
        <taxon>Embryophyta</taxon>
        <taxon>Tracheophyta</taxon>
        <taxon>Spermatophyta</taxon>
        <taxon>Magnoliopsida</taxon>
        <taxon>Liliopsida</taxon>
        <taxon>Poales</taxon>
        <taxon>Poaceae</taxon>
        <taxon>PACMAD clade</taxon>
        <taxon>Panicoideae</taxon>
        <taxon>Panicodae</taxon>
        <taxon>Paniceae</taxon>
        <taxon>Panicinae</taxon>
        <taxon>Panicum</taxon>
        <taxon>Panicum sect. Hiantes</taxon>
    </lineage>
</organism>
<feature type="chain" id="PRO_0000417792" description="Casparian strip membrane protein 1">
    <location>
        <begin position="1"/>
        <end position="184"/>
    </location>
</feature>
<feature type="topological domain" description="Cytoplasmic" evidence="2">
    <location>
        <begin position="1"/>
        <end position="24"/>
    </location>
</feature>
<feature type="transmembrane region" description="Helical" evidence="2">
    <location>
        <begin position="25"/>
        <end position="45"/>
    </location>
</feature>
<feature type="topological domain" description="Extracellular" evidence="2">
    <location>
        <begin position="46"/>
        <end position="72"/>
    </location>
</feature>
<feature type="transmembrane region" description="Helical" evidence="2">
    <location>
        <begin position="73"/>
        <end position="93"/>
    </location>
</feature>
<feature type="topological domain" description="Cytoplasmic" evidence="2">
    <location>
        <begin position="94"/>
        <end position="105"/>
    </location>
</feature>
<feature type="transmembrane region" description="Helical" evidence="2">
    <location>
        <begin position="106"/>
        <end position="126"/>
    </location>
</feature>
<feature type="topological domain" description="Extracellular" evidence="2">
    <location>
        <begin position="127"/>
        <end position="159"/>
    </location>
</feature>
<feature type="transmembrane region" description="Helical" evidence="2">
    <location>
        <begin position="160"/>
        <end position="180"/>
    </location>
</feature>
<feature type="topological domain" description="Cytoplasmic" evidence="2">
    <location>
        <begin position="181"/>
        <end position="184"/>
    </location>
</feature>
<feature type="glycosylation site" description="N-linked (GlcNAc...) asparagine" evidence="2">
    <location>
        <position position="49"/>
    </location>
</feature>
<reference key="1">
    <citation type="submission" date="2008-09" db="EMBL/GenBank/DDBJ databases">
        <title>DOE Joint Genome Institute Panicum virgatum EST project.</title>
        <authorList>
            <person name="Lucas S."/>
            <person name="Rokhsar D."/>
            <person name="Wang M."/>
            <person name="Lindquist E.A."/>
            <person name="Tobias C.M."/>
            <person name="Twigg P."/>
            <person name="Sarath G."/>
            <person name="Anderson O."/>
            <person name="Vogel K."/>
        </authorList>
    </citation>
    <scope>NUCLEOTIDE SEQUENCE [LARGE SCALE MRNA]</scope>
    <source>
        <tissue>Flower</tissue>
        <tissue>Flower bud</tissue>
    </source>
</reference>
<reference key="2">
    <citation type="journal article" date="2014" name="Plant Physiol.">
        <title>Functional and evolutionary analysis of the CASPARIAN STRIP MEMBRANE DOMAIN PROTEIN family.</title>
        <authorList>
            <person name="Roppolo D."/>
            <person name="Boeckmann B."/>
            <person name="Pfister A."/>
            <person name="Boutet E."/>
            <person name="Rubio M.C."/>
            <person name="Denervaud-Tendon V."/>
            <person name="Vermeer J.E."/>
            <person name="Gheyselinck J."/>
            <person name="Xenarios I."/>
            <person name="Geldner N."/>
        </authorList>
    </citation>
    <scope>GENE FAMILY</scope>
    <scope>NOMENCLATURE</scope>
</reference>
<keyword id="KW-1003">Cell membrane</keyword>
<keyword id="KW-0961">Cell wall biogenesis/degradation</keyword>
<keyword id="KW-0325">Glycoprotein</keyword>
<keyword id="KW-0472">Membrane</keyword>
<keyword id="KW-0812">Transmembrane</keyword>
<keyword id="KW-1133">Transmembrane helix</keyword>
<comment type="function">
    <text evidence="1">Regulates membrane-cell wall junctions and localized cell wall deposition. Required for establishment of the Casparian strip membrane domain (CSD) and the subsequent formation of Casparian strips, a cell wall modification of the root endodermis that determines an apoplastic barrier between the intraorganismal apoplasm and the extraorganismal apoplasm and prevents lateral diffusion (By similarity).</text>
</comment>
<comment type="subunit">
    <text evidence="1">Homodimer and heterodimers.</text>
</comment>
<comment type="subcellular location">
    <subcellularLocation>
        <location evidence="1">Cell membrane</location>
        <topology evidence="1">Multi-pass membrane protein</topology>
    </subcellularLocation>
    <text evidence="1">Very restricted localization following a belt shape within the plasma membrane which coincides with the position of the Casparian strip membrane domain in the root endodermis.</text>
</comment>
<comment type="similarity">
    <text evidence="3">Belongs to the Casparian strip membrane proteins (CASP) family.</text>
</comment>
<protein>
    <recommendedName>
        <fullName>Casparian strip membrane protein 1</fullName>
        <shortName>PvCASP1</shortName>
    </recommendedName>
</protein>
<proteinExistence type="evidence at transcript level"/>
<name>CASP1_PANVG</name>
<evidence type="ECO:0000250" key="1"/>
<evidence type="ECO:0000255" key="2"/>
<evidence type="ECO:0000305" key="3"/>